<dbReference type="EC" id="5.3.3.-" evidence="2"/>
<dbReference type="EMBL" id="AB671231">
    <property type="protein sequence ID" value="BAL42248.1"/>
    <property type="molecule type" value="Genomic_DNA"/>
</dbReference>
<dbReference type="RefSeq" id="WP_003641674.1">
    <property type="nucleotide sequence ID" value="NZ_AP028145.1"/>
</dbReference>
<dbReference type="SMR" id="P0DX41"/>
<dbReference type="GeneID" id="77216741"/>
<dbReference type="UniPathway" id="UPA00199"/>
<dbReference type="GO" id="GO:0005737">
    <property type="term" value="C:cytoplasm"/>
    <property type="evidence" value="ECO:0007669"/>
    <property type="project" value="UniProtKB-SubCell"/>
</dbReference>
<dbReference type="GO" id="GO:0016853">
    <property type="term" value="F:isomerase activity"/>
    <property type="evidence" value="ECO:0007669"/>
    <property type="project" value="UniProtKB-KW"/>
</dbReference>
<dbReference type="GO" id="GO:0016829">
    <property type="term" value="F:lyase activity"/>
    <property type="evidence" value="ECO:0007669"/>
    <property type="project" value="InterPro"/>
</dbReference>
<dbReference type="GO" id="GO:0006631">
    <property type="term" value="P:fatty acid metabolic process"/>
    <property type="evidence" value="ECO:0007669"/>
    <property type="project" value="UniProtKB-UniPathway"/>
</dbReference>
<dbReference type="GO" id="GO:0009636">
    <property type="term" value="P:response to toxic substance"/>
    <property type="evidence" value="ECO:0007669"/>
    <property type="project" value="UniProtKB-KW"/>
</dbReference>
<dbReference type="Gene3D" id="2.40.400.10">
    <property type="entry name" value="Acetoacetate decarboxylase-like"/>
    <property type="match status" value="1"/>
</dbReference>
<dbReference type="InterPro" id="IPR010451">
    <property type="entry name" value="Acetoacetate_decarboxylase"/>
</dbReference>
<dbReference type="InterPro" id="IPR023375">
    <property type="entry name" value="ADC_dom_sf"/>
</dbReference>
<dbReference type="Pfam" id="PF06314">
    <property type="entry name" value="ADC"/>
    <property type="match status" value="1"/>
</dbReference>
<dbReference type="SUPFAM" id="SSF160104">
    <property type="entry name" value="Acetoacetate decarboxylase-like"/>
    <property type="match status" value="1"/>
</dbReference>
<protein>
    <recommendedName>
        <fullName evidence="5">CLA biosynthesis isomerase</fullName>
        <shortName evidence="3">CLA-DC</shortName>
        <ecNumber evidence="2">5.3.3.-</ecNumber>
    </recommendedName>
</protein>
<feature type="chain" id="PRO_0000458873" description="CLA biosynthesis isomerase">
    <location>
        <begin position="1"/>
        <end position="281"/>
    </location>
</feature>
<organism>
    <name type="scientific">Lactiplantibacillus plantarum</name>
    <name type="common">Lactobacillus plantarum</name>
    <dbReference type="NCBI Taxonomy" id="1590"/>
    <lineage>
        <taxon>Bacteria</taxon>
        <taxon>Bacillati</taxon>
        <taxon>Bacillota</taxon>
        <taxon>Bacilli</taxon>
        <taxon>Lactobacillales</taxon>
        <taxon>Lactobacillaceae</taxon>
        <taxon>Lactiplantibacillus</taxon>
    </lineage>
</organism>
<evidence type="ECO:0000269" key="1">
    <source>
    </source>
</evidence>
<evidence type="ECO:0000269" key="2">
    <source>
    </source>
</evidence>
<evidence type="ECO:0000303" key="3">
    <source>
    </source>
</evidence>
<evidence type="ECO:0000305" key="4"/>
<evidence type="ECO:0000305" key="5">
    <source>
    </source>
</evidence>
<evidence type="ECO:0000312" key="6">
    <source>
        <dbReference type="EMBL" id="BAL42248.1"/>
    </source>
</evidence>
<sequence>MASFIASDQDVKNFLTAPSMNDQEGIGFAYATDEAVLKALIPAPLKLMAPVVCGYVVHMGKPTFSAPYLEESLFALVSYKDKMMGAYPINLLLHGPGAESGVIAGREGAGIPKKLADDIELRRNDNSATATVERHGKTLLNVSWTAGELNDPSIMKQFAGQLALGKEAEMNSFFYKYDIDQHEDGTNHFSNVQLVATQLRSLADQVEPGNLSIQLESTDDDPFGELKVLKPLGAAWFHFDTSVMFNTLKLDEVDAATTMPKLLTGRYDRSFFNPKAATYII</sequence>
<name>CLADC_LACPN</name>
<keyword id="KW-0963">Cytoplasm</keyword>
<keyword id="KW-0216">Detoxification</keyword>
<keyword id="KW-0413">Isomerase</keyword>
<gene>
    <name evidence="3 6" type="primary">cla-dc</name>
</gene>
<comment type="function">
    <text evidence="1 2">Is involved in a saturation metabolic pathway of polyunsaturated fatty acids, that detoxifies unsaturated fatty acids and generates hydroxy fatty acids, oxo fatty acids, conjugated fatty acids such as conjugated linoleic acids (CLAs), and partially saturated trans-fatty acids as intermediates. CLA-DC catalyzes the migration of the carbon-carbon double bond in 10-oxo-(12Z)-octadecenoate to produce 10-oxo-(11E)-octadecenoate, during linoleate metabolism (PubMed:22093837, PubMed:24127592). As part of the gut microbiome, this enzyme modifies host fatty acid composition and is expected to improve human health by altering lipid metabolism related to the onset of metabolic syndrome (PubMed:24127592).</text>
</comment>
<comment type="catalytic activity">
    <reaction evidence="2">
        <text>10-oxo-(12Z)-octadecenoate = 10-oxo-(11E)-octadecenoate</text>
        <dbReference type="Rhea" id="RHEA:75735"/>
        <dbReference type="ChEBI" id="CHEBI:194435"/>
        <dbReference type="ChEBI" id="CHEBI:194436"/>
    </reaction>
    <physiologicalReaction direction="left-to-right" evidence="2">
        <dbReference type="Rhea" id="RHEA:75736"/>
    </physiologicalReaction>
</comment>
<comment type="pathway">
    <text evidence="1 2">Lipid metabolism; fatty acid metabolism.</text>
</comment>
<comment type="subcellular location">
    <subcellularLocation>
        <location evidence="1">Cytoplasm</location>
    </subcellularLocation>
</comment>
<comment type="similarity">
    <text evidence="4">Belongs to the ADC family.</text>
</comment>
<reference evidence="6" key="1">
    <citation type="journal article" date="2011" name="Biochem. Biophys. Res. Commun.">
        <title>Novel multi-component enzyme machinery in lactic acid bacteria catalyzing C=C double bond migration useful for conjugated fatty acid synthesis.</title>
        <authorList>
            <person name="Kishino S."/>
            <person name="Park S.B."/>
            <person name="Takeuchi M."/>
            <person name="Yokozeki K."/>
            <person name="Shimizu S."/>
            <person name="Ogawa J."/>
        </authorList>
    </citation>
    <scope>NUCLEOTIDE SEQUENCE [GENOMIC DNA]</scope>
    <scope>FUNCTION</scope>
    <scope>PATHWAY</scope>
    <scope>SUBCELLULAR LOCATION</scope>
    <source>
        <strain>AKU 1009a</strain>
    </source>
</reference>
<reference key="2">
    <citation type="journal article" date="2013" name="Proc. Natl. Acad. Sci. U.S.A.">
        <title>Polyunsaturated fatty acid saturation by gut lactic acid bacteria affecting host lipid composition.</title>
        <authorList>
            <person name="Kishino S."/>
            <person name="Takeuchi M."/>
            <person name="Park S.B."/>
            <person name="Hirata A."/>
            <person name="Kitamura N."/>
            <person name="Kunisawa J."/>
            <person name="Kiyono H."/>
            <person name="Iwamoto R."/>
            <person name="Isobe Y."/>
            <person name="Arita M."/>
            <person name="Arai H."/>
            <person name="Ueda K."/>
            <person name="Shima J."/>
            <person name="Takahashi S."/>
            <person name="Yokozeki K."/>
            <person name="Shimizu S."/>
            <person name="Ogawa J."/>
        </authorList>
    </citation>
    <scope>FUNCTION</scope>
    <scope>CATALYTIC ACTIVITY</scope>
    <scope>PATHWAY</scope>
    <source>
        <strain>AKU 1009a</strain>
    </source>
</reference>
<proteinExistence type="evidence at protein level"/>
<accession>P0DX41</accession>